<reference key="1">
    <citation type="patent" date="2002-10-22" number="JP2002534996">
        <title>Alpha-conotoxin peptides.</title>
        <authorList>
            <person name="Watkins M."/>
            <person name="Olivera B.M."/>
            <person name="Hillyard D.R."/>
            <person name="Mcintosh M.J."/>
            <person name="Jones R.M."/>
        </authorList>
    </citation>
    <scope>NUCLEOTIDE SEQUENCE</scope>
</reference>
<reference key="2">
    <citation type="patent" date="2004-09-28" number="US6797808">
        <title>Alpha-conotoxin peptides.</title>
        <authorList>
            <person name="Watkins M."/>
            <person name="Olivera B.M."/>
            <person name="Hillyard D.R."/>
            <person name="McIntosh J.M."/>
            <person name="Jones R.M."/>
        </authorList>
    </citation>
    <scope>NUCLEOTIDE SEQUENCE [GENOMIC DNA]</scope>
    <source>
        <tissue>Venom</tissue>
    </source>
</reference>
<reference key="3">
    <citation type="journal article" date="2016" name="Angew. Chem. Int. Ed.">
        <title>Structure-activity studies of cysteine-rich alpha-conotoxins that inhibit high-voltage-activated calcium channels via GABA(B) receptor activation reveal a minimal functional motif.</title>
        <authorList>
            <person name="Carstens B.B."/>
            <person name="Berecki G."/>
            <person name="Daniel J.T."/>
            <person name="Lee H.S."/>
            <person name="Jackson K.A."/>
            <person name="Tae H.S."/>
            <person name="Sadeghi M."/>
            <person name="Castro J."/>
            <person name="O'Donnell T."/>
            <person name="Deiteren A."/>
            <person name="Brierley S.M."/>
            <person name="Craik D.J."/>
            <person name="Adams D.J."/>
            <person name="Clark R.J."/>
        </authorList>
    </citation>
    <scope>FUNCTION</scope>
    <scope>SYNTHESIS OF 40-55</scope>
    <scope>AMIDATION AT CYS-55</scope>
</reference>
<name>CA12_CONPE</name>
<comment type="function">
    <text evidence="1 4">Alpha-conotoxins act on postsynaptic membranes, they bind to the nicotinic acetylcholine receptors (nAChR) and thus inhibit them. This toxin inhibits human alpha-7/CHRNA7 and alpha-9-alpha-10/CHRNA9/CHRNA10 AChR (complete inhibition at 3 uM of toxin). In addition, this toxin inhibits high voltage-activated (HVA) calcium channel currents in rat DRG neurons (22% inhibition at 1 uM toxin) probably by activating GABA(B) receptors (GABBR1 and/or GABBR2) (PubMed:26948522).</text>
</comment>
<comment type="subcellular location">
    <subcellularLocation>
        <location evidence="7">Secreted</location>
    </subcellularLocation>
</comment>
<comment type="tissue specificity">
    <text evidence="7">Expressed by the venom duct.</text>
</comment>
<comment type="domain">
    <text evidence="7">The cysteine framework is I (CC-C-C). Alpha4/7 pattern.</text>
</comment>
<comment type="PTM">
    <text evidence="5">Non-native isomers 'ribbon' (with disulfide connectivity C1-C4; C2-C3) and 'beads' (with disulfide connectivity C1-C2; C3-C4) also inhibit high voltage-activated (HVA) calcium channel currents in rat DRG neurons (20-30% inhibition at 1 uM toxin) (Ref.1).</text>
</comment>
<comment type="similarity">
    <text evidence="7">Belongs to the conotoxin A superfamily.</text>
</comment>
<feature type="signal peptide" evidence="3">
    <location>
        <begin position="1"/>
        <end position="16"/>
    </location>
</feature>
<feature type="propeptide" id="PRO_0000445677" evidence="8">
    <location>
        <begin position="17"/>
        <end position="39"/>
    </location>
</feature>
<feature type="peptide" id="PRO_0000445678" description="Alpha-conotoxin Pn1.2" evidence="8">
    <location>
        <begin position="40"/>
        <end position="55"/>
    </location>
</feature>
<feature type="region of interest" description="Ser-Xaa-Pro motif, crucial for potent interaction with nAChR" evidence="2">
    <location>
        <begin position="43"/>
        <end position="45"/>
    </location>
</feature>
<feature type="modified residue" description="Cysteine amide" evidence="8">
    <location>
        <position position="55"/>
    </location>
</feature>
<feature type="disulfide bond" evidence="8">
    <location>
        <begin position="41"/>
        <end position="47"/>
    </location>
</feature>
<feature type="disulfide bond" evidence="8">
    <location>
        <begin position="42"/>
        <end position="55"/>
    </location>
</feature>
<evidence type="ECO:0000250" key="1">
    <source>
        <dbReference type="UniProtKB" id="P0CE73"/>
    </source>
</evidence>
<evidence type="ECO:0000250" key="2">
    <source>
        <dbReference type="UniProtKB" id="P56636"/>
    </source>
</evidence>
<evidence type="ECO:0000255" key="3"/>
<evidence type="ECO:0000269" key="4">
    <source>
    </source>
</evidence>
<evidence type="ECO:0000269" key="5">
    <source ref="1"/>
</evidence>
<evidence type="ECO:0000303" key="6">
    <source>
    </source>
</evidence>
<evidence type="ECO:0000305" key="7"/>
<evidence type="ECO:0000305" key="8">
    <source>
    </source>
</evidence>
<keyword id="KW-0008">Acetylcholine receptor inhibiting toxin</keyword>
<keyword id="KW-0027">Amidation</keyword>
<keyword id="KW-1015">Disulfide bond</keyword>
<keyword id="KW-1213">G-protein coupled receptor impairing toxin</keyword>
<keyword id="KW-0872">Ion channel impairing toxin</keyword>
<keyword id="KW-0528">Neurotoxin</keyword>
<keyword id="KW-0629">Postsynaptic neurotoxin</keyword>
<keyword id="KW-0964">Secreted</keyword>
<keyword id="KW-0732">Signal</keyword>
<keyword id="KW-0800">Toxin</keyword>
<accession>P0DM23</accession>
<dbReference type="EMBL" id="BD261424">
    <property type="status" value="NOT_ANNOTATED_CDS"/>
    <property type="molecule type" value="Unassigned_DNA"/>
</dbReference>
<dbReference type="EMBL" id="AR584831">
    <property type="status" value="NOT_ANNOTATED_CDS"/>
    <property type="molecule type" value="Genomic_DNA"/>
</dbReference>
<dbReference type="GO" id="GO:0005576">
    <property type="term" value="C:extracellular region"/>
    <property type="evidence" value="ECO:0007669"/>
    <property type="project" value="UniProtKB-SubCell"/>
</dbReference>
<dbReference type="GO" id="GO:0035792">
    <property type="term" value="C:host cell postsynaptic membrane"/>
    <property type="evidence" value="ECO:0007669"/>
    <property type="project" value="UniProtKB-KW"/>
</dbReference>
<dbReference type="GO" id="GO:0030550">
    <property type="term" value="F:acetylcholine receptor inhibitor activity"/>
    <property type="evidence" value="ECO:0007669"/>
    <property type="project" value="UniProtKB-KW"/>
</dbReference>
<dbReference type="GO" id="GO:0099106">
    <property type="term" value="F:ion channel regulator activity"/>
    <property type="evidence" value="ECO:0007669"/>
    <property type="project" value="UniProtKB-KW"/>
</dbReference>
<dbReference type="GO" id="GO:0090729">
    <property type="term" value="F:toxin activity"/>
    <property type="evidence" value="ECO:0007669"/>
    <property type="project" value="UniProtKB-KW"/>
</dbReference>
<dbReference type="InterPro" id="IPR009958">
    <property type="entry name" value="Conotoxin_a-typ"/>
</dbReference>
<dbReference type="InterPro" id="IPR018072">
    <property type="entry name" value="Conotoxin_a-typ_CS"/>
</dbReference>
<dbReference type="Pfam" id="PF07365">
    <property type="entry name" value="Toxin_8"/>
    <property type="match status" value="1"/>
</dbReference>
<dbReference type="PROSITE" id="PS60014">
    <property type="entry name" value="ALPHA_CONOTOXIN"/>
    <property type="match status" value="1"/>
</dbReference>
<protein>
    <recommendedName>
        <fullName evidence="6">Alpha-conotoxin Pn1.2</fullName>
    </recommendedName>
</protein>
<proteinExistence type="evidence at protein level"/>
<organism>
    <name type="scientific">Conus pennaceus</name>
    <name type="common">Feathered cone</name>
    <name type="synonym">Conus episcopus</name>
    <dbReference type="NCBI Taxonomy" id="37335"/>
    <lineage>
        <taxon>Eukaryota</taxon>
        <taxon>Metazoa</taxon>
        <taxon>Spiralia</taxon>
        <taxon>Lophotrochozoa</taxon>
        <taxon>Mollusca</taxon>
        <taxon>Gastropoda</taxon>
        <taxon>Caenogastropoda</taxon>
        <taxon>Neogastropoda</taxon>
        <taxon>Conoidea</taxon>
        <taxon>Conidae</taxon>
        <taxon>Conus</taxon>
        <taxon>Darioconus</taxon>
    </lineage>
</organism>
<sequence length="56" mass="5886">MFTVFLLVVLATTVVSFTSDRASDGGNAAMSDLIALTIKGCCSHPPCFLNNPDYCG</sequence>